<comment type="function">
    <text evidence="1">Required for 40S ribosome biogenesis. Involved in nucleolar processing of pre-18S ribosomal RNA and ribosome assembly. Binds to RNA. Required for female germline development, cell viability during eye development and for survival of dividing cells and epithelial cells during early wing disk development (By similarity).</text>
</comment>
<comment type="subunit">
    <text evidence="1">Monomer. Component of the ribosomal small subunit (SSU) processome (By similarity).</text>
</comment>
<comment type="subcellular location">
    <subcellularLocation>
        <location evidence="1">Nucleus</location>
        <location evidence="1">Nucleolus</location>
    </subcellularLocation>
</comment>
<comment type="similarity">
    <text evidence="2">Belongs to the KRR1 family.</text>
</comment>
<organism>
    <name type="scientific">Drosophila yakuba</name>
    <name type="common">Fruit fly</name>
    <dbReference type="NCBI Taxonomy" id="7245"/>
    <lineage>
        <taxon>Eukaryota</taxon>
        <taxon>Metazoa</taxon>
        <taxon>Ecdysozoa</taxon>
        <taxon>Arthropoda</taxon>
        <taxon>Hexapoda</taxon>
        <taxon>Insecta</taxon>
        <taxon>Pterygota</taxon>
        <taxon>Neoptera</taxon>
        <taxon>Endopterygota</taxon>
        <taxon>Diptera</taxon>
        <taxon>Brachycera</taxon>
        <taxon>Muscomorpha</taxon>
        <taxon>Ephydroidea</taxon>
        <taxon>Drosophilidae</taxon>
        <taxon>Drosophila</taxon>
        <taxon>Sophophora</taxon>
    </lineage>
</organism>
<name>KRR1_DROYA</name>
<evidence type="ECO:0000250" key="1">
    <source>
        <dbReference type="UniProtKB" id="Q9VPU8"/>
    </source>
</evidence>
<evidence type="ECO:0000255" key="2"/>
<evidence type="ECO:0000256" key="3">
    <source>
        <dbReference type="SAM" id="MobiDB-lite"/>
    </source>
</evidence>
<evidence type="ECO:0000312" key="4">
    <source>
        <dbReference type="EMBL" id="EDW87195.1"/>
    </source>
</evidence>
<gene>
    <name evidence="1" type="primary">dbe</name>
    <name evidence="1" type="synonym">dribble</name>
    <name type="ORF">GE15854</name>
</gene>
<keyword id="KW-0175">Coiled coil</keyword>
<keyword id="KW-0217">Developmental protein</keyword>
<keyword id="KW-0539">Nucleus</keyword>
<keyword id="KW-0687">Ribonucleoprotein</keyword>
<keyword id="KW-0690">Ribosome biogenesis</keyword>
<keyword id="KW-0694">RNA-binding</keyword>
<keyword id="KW-0698">rRNA processing</keyword>
<feature type="chain" id="PRO_0000415658" description="KRR1 small subunit processome component homolog">
    <location>
        <begin position="1"/>
        <end position="344"/>
    </location>
</feature>
<feature type="domain" description="KH" evidence="2">
    <location>
        <begin position="125"/>
        <end position="193"/>
    </location>
</feature>
<feature type="region of interest" description="Disordered" evidence="3">
    <location>
        <begin position="232"/>
        <end position="260"/>
    </location>
</feature>
<feature type="region of interest" description="Disordered" evidence="3">
    <location>
        <begin position="273"/>
        <end position="326"/>
    </location>
</feature>
<feature type="coiled-coil region" evidence="2">
    <location>
        <begin position="270"/>
        <end position="295"/>
    </location>
</feature>
<feature type="compositionally biased region" description="Basic residues" evidence="3">
    <location>
        <begin position="232"/>
        <end position="245"/>
    </location>
</feature>
<feature type="compositionally biased region" description="Basic and acidic residues" evidence="3">
    <location>
        <begin position="283"/>
        <end position="302"/>
    </location>
</feature>
<feature type="compositionally biased region" description="Basic and acidic residues" evidence="3">
    <location>
        <begin position="315"/>
        <end position="326"/>
    </location>
</feature>
<sequence length="344" mass="39668">MSESEAEETKISTEPVDNAWAMKIPTFRQEDNPHGVVEESSFATLFPKYRERYLKEVWPLVEQCLSEHHLKAELDLMEGSMVVKTSRKTWDPYIIIKARDMIKLMARSVPFEQAKRVLQDDIGCDIIKIGNLVHKKEKFVKRRQRLIGPNGATLKSIELLTDCYVLVQGNTVSALGPYKGLQQVRDIVLETMNNVHPIYNIKALMIKRELMKDPRLANEDWSRFLPKFKNKNISKRKQPKVKKQKKEYTPFPPSQPESKVDKQLASGEYFLNQEQKQAKRNQGRTEKQKEAAKRQDERRNKDFVPPTEESAASSRKKEDGSSTKVDVKALKAKLIKANKKAKSS</sequence>
<accession>B4P2Y8</accession>
<proteinExistence type="inferred from homology"/>
<dbReference type="EMBL" id="CM000157">
    <property type="protein sequence ID" value="EDW87195.1"/>
    <property type="molecule type" value="Genomic_DNA"/>
</dbReference>
<dbReference type="SMR" id="B4P2Y8"/>
<dbReference type="EnsemblMetazoa" id="FBtr0262372">
    <property type="protein sequence ID" value="FBpp0260864"/>
    <property type="gene ID" value="FBgn0233416"/>
</dbReference>
<dbReference type="EnsemblMetazoa" id="XM_002087447.4">
    <property type="protein sequence ID" value="XP_002087483.1"/>
    <property type="gene ID" value="LOC6526362"/>
</dbReference>
<dbReference type="GeneID" id="6526362"/>
<dbReference type="KEGG" id="dya:Dyak_GE15854"/>
<dbReference type="CTD" id="33269"/>
<dbReference type="eggNOG" id="KOG2874">
    <property type="taxonomic scope" value="Eukaryota"/>
</dbReference>
<dbReference type="HOGENOM" id="CLU_040185_0_2_1"/>
<dbReference type="OMA" id="TPDIDKW"/>
<dbReference type="OrthoDB" id="441223at2759"/>
<dbReference type="PhylomeDB" id="B4P2Y8"/>
<dbReference type="Proteomes" id="UP000002282">
    <property type="component" value="Chromosome 2L"/>
</dbReference>
<dbReference type="GO" id="GO:0005730">
    <property type="term" value="C:nucleolus"/>
    <property type="evidence" value="ECO:0007669"/>
    <property type="project" value="UniProtKB-SubCell"/>
</dbReference>
<dbReference type="GO" id="GO:0005654">
    <property type="term" value="C:nucleoplasm"/>
    <property type="evidence" value="ECO:0007669"/>
    <property type="project" value="EnsemblMetazoa"/>
</dbReference>
<dbReference type="GO" id="GO:0032040">
    <property type="term" value="C:small-subunit processome"/>
    <property type="evidence" value="ECO:0007669"/>
    <property type="project" value="TreeGrafter"/>
</dbReference>
<dbReference type="GO" id="GO:0003723">
    <property type="term" value="F:RNA binding"/>
    <property type="evidence" value="ECO:0007669"/>
    <property type="project" value="UniProtKB-KW"/>
</dbReference>
<dbReference type="GO" id="GO:0006364">
    <property type="term" value="P:rRNA processing"/>
    <property type="evidence" value="ECO:0007669"/>
    <property type="project" value="UniProtKB-KW"/>
</dbReference>
<dbReference type="CDD" id="cd22393">
    <property type="entry name" value="KH-I_KRR1_rpt1"/>
    <property type="match status" value="1"/>
</dbReference>
<dbReference type="CDD" id="cd22394">
    <property type="entry name" value="KH-I_KRR1_rpt2"/>
    <property type="match status" value="1"/>
</dbReference>
<dbReference type="FunFam" id="3.30.1370.10:FF:000011">
    <property type="entry name" value="KRR1 small subunit processome component"/>
    <property type="match status" value="1"/>
</dbReference>
<dbReference type="FunFam" id="3.30.1370.10:FF:000014">
    <property type="entry name" value="KRR1 small subunit processome component"/>
    <property type="match status" value="1"/>
</dbReference>
<dbReference type="Gene3D" id="3.30.1370.10">
    <property type="entry name" value="K Homology domain, type 1"/>
    <property type="match status" value="2"/>
</dbReference>
<dbReference type="InterPro" id="IPR004087">
    <property type="entry name" value="KH_dom"/>
</dbReference>
<dbReference type="InterPro" id="IPR036612">
    <property type="entry name" value="KH_dom_type_1_sf"/>
</dbReference>
<dbReference type="InterPro" id="IPR041174">
    <property type="entry name" value="KRR1-like_KH1"/>
</dbReference>
<dbReference type="InterPro" id="IPR048550">
    <property type="entry name" value="KRR1-like_KH1_euk"/>
</dbReference>
<dbReference type="InterPro" id="IPR048548">
    <property type="entry name" value="KRR1-like_KH2"/>
</dbReference>
<dbReference type="InterPro" id="IPR048549">
    <property type="entry name" value="KRR1-like_KH2_euk"/>
</dbReference>
<dbReference type="InterPro" id="IPR024166">
    <property type="entry name" value="rRNA_assembly_KRR1"/>
</dbReference>
<dbReference type="PANTHER" id="PTHR12581">
    <property type="entry name" value="HIV-1 REV BINDING PROTEIN 2, 3"/>
    <property type="match status" value="1"/>
</dbReference>
<dbReference type="PANTHER" id="PTHR12581:SF0">
    <property type="entry name" value="KRR1 SMALL SUBUNIT PROCESSOME COMPONENT HOMOLOG"/>
    <property type="match status" value="1"/>
</dbReference>
<dbReference type="Pfam" id="PF17903">
    <property type="entry name" value="KH_KRR1_1st"/>
    <property type="match status" value="1"/>
</dbReference>
<dbReference type="Pfam" id="PF21800">
    <property type="entry name" value="KH_KRR1_2nd"/>
    <property type="match status" value="1"/>
</dbReference>
<dbReference type="PIRSF" id="PIRSF006515">
    <property type="entry name" value="KRR1"/>
    <property type="match status" value="1"/>
</dbReference>
<dbReference type="SMART" id="SM00322">
    <property type="entry name" value="KH"/>
    <property type="match status" value="1"/>
</dbReference>
<dbReference type="SUPFAM" id="SSF54791">
    <property type="entry name" value="Eukaryotic type KH-domain (KH-domain type I)"/>
    <property type="match status" value="1"/>
</dbReference>
<reference evidence="4" key="1">
    <citation type="journal article" date="2007" name="Nature">
        <title>Evolution of genes and genomes on the Drosophila phylogeny.</title>
        <authorList>
            <consortium name="Drosophila 12 genomes consortium"/>
        </authorList>
    </citation>
    <scope>NUCLEOTIDE SEQUENCE [LARGE SCALE GENOMIC DNA]</scope>
    <source>
        <strain evidence="4">Tai18E2 / Tucson 14021-0261.01</strain>
    </source>
</reference>
<protein>
    <recommendedName>
        <fullName evidence="1">KRR1 small subunit processome component homolog</fullName>
    </recommendedName>
    <alternativeName>
        <fullName evidence="1">KRR-R motif-containing protein 1</fullName>
    </alternativeName>
    <alternativeName>
        <fullName evidence="1">Protein dribble</fullName>
    </alternativeName>
</protein>